<evidence type="ECO:0000250" key="1"/>
<evidence type="ECO:0000256" key="2">
    <source>
        <dbReference type="SAM" id="MobiDB-lite"/>
    </source>
</evidence>
<evidence type="ECO:0000269" key="3">
    <source>
    </source>
</evidence>
<evidence type="ECO:0000269" key="4">
    <source>
    </source>
</evidence>
<evidence type="ECO:0000269" key="5">
    <source>
    </source>
</evidence>
<evidence type="ECO:0000305" key="6"/>
<comment type="function">
    <text evidence="1 5">Single-stranded DNA-dependent ATP-dependent helicase. Involved in non-homologous end joining (NHEJ) DNA double strand break repair (By similarity). Sequence-specific DNA-binding protein that has a high affinity for a 31 bp sequence in the Yp1 gene. Site-specific DNA binding to 31 bp P element inverted repeats.</text>
</comment>
<comment type="catalytic activity">
    <reaction>
        <text>ATP + H2O = ADP + phosphate + H(+)</text>
        <dbReference type="Rhea" id="RHEA:13065"/>
        <dbReference type="ChEBI" id="CHEBI:15377"/>
        <dbReference type="ChEBI" id="CHEBI:15378"/>
        <dbReference type="ChEBI" id="CHEBI:30616"/>
        <dbReference type="ChEBI" id="CHEBI:43474"/>
        <dbReference type="ChEBI" id="CHEBI:456216"/>
        <dbReference type="EC" id="3.6.4.12"/>
    </reaction>
</comment>
<comment type="subunit">
    <text>Heterodimer of a 70 kDa and a 80 kDa subunit.</text>
</comment>
<comment type="subcellular location">
    <subcellularLocation>
        <location>Nucleus</location>
    </subcellularLocation>
    <subcellularLocation>
        <location>Chromosome</location>
    </subcellularLocation>
</comment>
<comment type="developmental stage">
    <text evidence="5">Expressed both maternally and zygotically, expression is at low levels in all stages of development.</text>
</comment>
<comment type="similarity">
    <text evidence="6">Belongs to the ku70 family.</text>
</comment>
<comment type="sequence caution" evidence="6">
    <conflict type="frameshift">
        <sequence resource="EMBL-CDS" id="AAL48866"/>
    </conflict>
</comment>
<reference key="1">
    <citation type="journal article" date="1994" name="J. Biol. Chem.">
        <title>Yolk protein factor 1 is a Drosophila homolog of Ku, the DNA-binding subunit of a DNA-dependent protein kinase from humans.</title>
        <authorList>
            <person name="Jacoby D.B."/>
            <person name="Wensink P.C."/>
        </authorList>
    </citation>
    <scope>NUCLEOTIDE SEQUENCE [MRNA]</scope>
    <scope>FUNCTION</scope>
    <scope>DEVELOPMENTAL STAGE</scope>
    <scope>VARIANTS SER-174 AND PRO-553</scope>
    <source>
        <strain>Canton-S</strain>
        <tissue>Ovary</tissue>
    </source>
</reference>
<reference key="2">
    <citation type="journal article" date="1994" name="Proc. Natl. Acad. Sci. U.S.A.">
        <title>A Drosophila protein homologous to the human p70 Ku autoimmune antigen interacts with the P transposable element inverted repeats.</title>
        <authorList>
            <person name="Beall E.L."/>
            <person name="Admon A."/>
            <person name="Rio D.C."/>
        </authorList>
    </citation>
    <scope>NUCLEOTIDE SEQUENCE [MRNA]</scope>
    <scope>VARIANT PRO-553</scope>
    <source>
        <strain>SB2040</strain>
        <tissue>Embryo</tissue>
    </source>
</reference>
<reference key="3">
    <citation type="journal article" date="2000" name="Science">
        <title>The genome sequence of Drosophila melanogaster.</title>
        <authorList>
            <person name="Adams M.D."/>
            <person name="Celniker S.E."/>
            <person name="Holt R.A."/>
            <person name="Evans C.A."/>
            <person name="Gocayne J.D."/>
            <person name="Amanatides P.G."/>
            <person name="Scherer S.E."/>
            <person name="Li P.W."/>
            <person name="Hoskins R.A."/>
            <person name="Galle R.F."/>
            <person name="George R.A."/>
            <person name="Lewis S.E."/>
            <person name="Richards S."/>
            <person name="Ashburner M."/>
            <person name="Henderson S.N."/>
            <person name="Sutton G.G."/>
            <person name="Wortman J.R."/>
            <person name="Yandell M.D."/>
            <person name="Zhang Q."/>
            <person name="Chen L.X."/>
            <person name="Brandon R.C."/>
            <person name="Rogers Y.-H.C."/>
            <person name="Blazej R.G."/>
            <person name="Champe M."/>
            <person name="Pfeiffer B.D."/>
            <person name="Wan K.H."/>
            <person name="Doyle C."/>
            <person name="Baxter E.G."/>
            <person name="Helt G."/>
            <person name="Nelson C.R."/>
            <person name="Miklos G.L.G."/>
            <person name="Abril J.F."/>
            <person name="Agbayani A."/>
            <person name="An H.-J."/>
            <person name="Andrews-Pfannkoch C."/>
            <person name="Baldwin D."/>
            <person name="Ballew R.M."/>
            <person name="Basu A."/>
            <person name="Baxendale J."/>
            <person name="Bayraktaroglu L."/>
            <person name="Beasley E.M."/>
            <person name="Beeson K.Y."/>
            <person name="Benos P.V."/>
            <person name="Berman B.P."/>
            <person name="Bhandari D."/>
            <person name="Bolshakov S."/>
            <person name="Borkova D."/>
            <person name="Botchan M.R."/>
            <person name="Bouck J."/>
            <person name="Brokstein P."/>
            <person name="Brottier P."/>
            <person name="Burtis K.C."/>
            <person name="Busam D.A."/>
            <person name="Butler H."/>
            <person name="Cadieu E."/>
            <person name="Center A."/>
            <person name="Chandra I."/>
            <person name="Cherry J.M."/>
            <person name="Cawley S."/>
            <person name="Dahlke C."/>
            <person name="Davenport L.B."/>
            <person name="Davies P."/>
            <person name="de Pablos B."/>
            <person name="Delcher A."/>
            <person name="Deng Z."/>
            <person name="Mays A.D."/>
            <person name="Dew I."/>
            <person name="Dietz S.M."/>
            <person name="Dodson K."/>
            <person name="Doup L.E."/>
            <person name="Downes M."/>
            <person name="Dugan-Rocha S."/>
            <person name="Dunkov B.C."/>
            <person name="Dunn P."/>
            <person name="Durbin K.J."/>
            <person name="Evangelista C.C."/>
            <person name="Ferraz C."/>
            <person name="Ferriera S."/>
            <person name="Fleischmann W."/>
            <person name="Fosler C."/>
            <person name="Gabrielian A.E."/>
            <person name="Garg N.S."/>
            <person name="Gelbart W.M."/>
            <person name="Glasser K."/>
            <person name="Glodek A."/>
            <person name="Gong F."/>
            <person name="Gorrell J.H."/>
            <person name="Gu Z."/>
            <person name="Guan P."/>
            <person name="Harris M."/>
            <person name="Harris N.L."/>
            <person name="Harvey D.A."/>
            <person name="Heiman T.J."/>
            <person name="Hernandez J.R."/>
            <person name="Houck J."/>
            <person name="Hostin D."/>
            <person name="Houston K.A."/>
            <person name="Howland T.J."/>
            <person name="Wei M.-H."/>
            <person name="Ibegwam C."/>
            <person name="Jalali M."/>
            <person name="Kalush F."/>
            <person name="Karpen G.H."/>
            <person name="Ke Z."/>
            <person name="Kennison J.A."/>
            <person name="Ketchum K.A."/>
            <person name="Kimmel B.E."/>
            <person name="Kodira C.D."/>
            <person name="Kraft C.L."/>
            <person name="Kravitz S."/>
            <person name="Kulp D."/>
            <person name="Lai Z."/>
            <person name="Lasko P."/>
            <person name="Lei Y."/>
            <person name="Levitsky A.A."/>
            <person name="Li J.H."/>
            <person name="Li Z."/>
            <person name="Liang Y."/>
            <person name="Lin X."/>
            <person name="Liu X."/>
            <person name="Mattei B."/>
            <person name="McIntosh T.C."/>
            <person name="McLeod M.P."/>
            <person name="McPherson D."/>
            <person name="Merkulov G."/>
            <person name="Milshina N.V."/>
            <person name="Mobarry C."/>
            <person name="Morris J."/>
            <person name="Moshrefi A."/>
            <person name="Mount S.M."/>
            <person name="Moy M."/>
            <person name="Murphy B."/>
            <person name="Murphy L."/>
            <person name="Muzny D.M."/>
            <person name="Nelson D.L."/>
            <person name="Nelson D.R."/>
            <person name="Nelson K.A."/>
            <person name="Nixon K."/>
            <person name="Nusskern D.R."/>
            <person name="Pacleb J.M."/>
            <person name="Palazzolo M."/>
            <person name="Pittman G.S."/>
            <person name="Pan S."/>
            <person name="Pollard J."/>
            <person name="Puri V."/>
            <person name="Reese M.G."/>
            <person name="Reinert K."/>
            <person name="Remington K."/>
            <person name="Saunders R.D.C."/>
            <person name="Scheeler F."/>
            <person name="Shen H."/>
            <person name="Shue B.C."/>
            <person name="Siden-Kiamos I."/>
            <person name="Simpson M."/>
            <person name="Skupski M.P."/>
            <person name="Smith T.J."/>
            <person name="Spier E."/>
            <person name="Spradling A.C."/>
            <person name="Stapleton M."/>
            <person name="Strong R."/>
            <person name="Sun E."/>
            <person name="Svirskas R."/>
            <person name="Tector C."/>
            <person name="Turner R."/>
            <person name="Venter E."/>
            <person name="Wang A.H."/>
            <person name="Wang X."/>
            <person name="Wang Z.-Y."/>
            <person name="Wassarman D.A."/>
            <person name="Weinstock G.M."/>
            <person name="Weissenbach J."/>
            <person name="Williams S.M."/>
            <person name="Woodage T."/>
            <person name="Worley K.C."/>
            <person name="Wu D."/>
            <person name="Yang S."/>
            <person name="Yao Q.A."/>
            <person name="Ye J."/>
            <person name="Yeh R.-F."/>
            <person name="Zaveri J.S."/>
            <person name="Zhan M."/>
            <person name="Zhang G."/>
            <person name="Zhao Q."/>
            <person name="Zheng L."/>
            <person name="Zheng X.H."/>
            <person name="Zhong F.N."/>
            <person name="Zhong W."/>
            <person name="Zhou X."/>
            <person name="Zhu S.C."/>
            <person name="Zhu X."/>
            <person name="Smith H.O."/>
            <person name="Gibbs R.A."/>
            <person name="Myers E.W."/>
            <person name="Rubin G.M."/>
            <person name="Venter J.C."/>
        </authorList>
    </citation>
    <scope>NUCLEOTIDE SEQUENCE [LARGE SCALE GENOMIC DNA]</scope>
    <source>
        <strain>Berkeley</strain>
    </source>
</reference>
<reference key="4">
    <citation type="journal article" date="2002" name="Genome Biol.">
        <title>Annotation of the Drosophila melanogaster euchromatic genome: a systematic review.</title>
        <authorList>
            <person name="Misra S."/>
            <person name="Crosby M.A."/>
            <person name="Mungall C.J."/>
            <person name="Matthews B.B."/>
            <person name="Campbell K.S."/>
            <person name="Hradecky P."/>
            <person name="Huang Y."/>
            <person name="Kaminker J.S."/>
            <person name="Millburn G.H."/>
            <person name="Prochnik S.E."/>
            <person name="Smith C.D."/>
            <person name="Tupy J.L."/>
            <person name="Whitfield E.J."/>
            <person name="Bayraktaroglu L."/>
            <person name="Berman B.P."/>
            <person name="Bettencourt B.R."/>
            <person name="Celniker S.E."/>
            <person name="de Grey A.D.N.J."/>
            <person name="Drysdale R.A."/>
            <person name="Harris N.L."/>
            <person name="Richter J."/>
            <person name="Russo S."/>
            <person name="Schroeder A.J."/>
            <person name="Shu S.Q."/>
            <person name="Stapleton M."/>
            <person name="Yamada C."/>
            <person name="Ashburner M."/>
            <person name="Gelbart W.M."/>
            <person name="Rubin G.M."/>
            <person name="Lewis S.E."/>
        </authorList>
    </citation>
    <scope>GENOME REANNOTATION</scope>
    <source>
        <strain>Berkeley</strain>
    </source>
</reference>
<reference key="5">
    <citation type="journal article" date="2002" name="Genome Biol.">
        <title>A Drosophila full-length cDNA resource.</title>
        <authorList>
            <person name="Stapleton M."/>
            <person name="Carlson J.W."/>
            <person name="Brokstein P."/>
            <person name="Yu C."/>
            <person name="Champe M."/>
            <person name="George R.A."/>
            <person name="Guarin H."/>
            <person name="Kronmiller B."/>
            <person name="Pacleb J.M."/>
            <person name="Park S."/>
            <person name="Wan K.H."/>
            <person name="Rubin G.M."/>
            <person name="Celniker S.E."/>
        </authorList>
    </citation>
    <scope>NUCLEOTIDE SEQUENCE [LARGE SCALE MRNA]</scope>
    <source>
        <strain>Berkeley</strain>
        <tissue>Embryo</tissue>
    </source>
</reference>
<reference key="6">
    <citation type="submission" date="2008-09" db="EMBL/GenBank/DDBJ databases">
        <authorList>
            <person name="Carlson J.W."/>
            <person name="Booth B."/>
            <person name="Frise E."/>
            <person name="Park S."/>
            <person name="Wan K.H."/>
            <person name="Yu C."/>
            <person name="Celniker S.E."/>
        </authorList>
    </citation>
    <scope>NUCLEOTIDE SEQUENCE [LARGE SCALE MRNA]</scope>
    <source>
        <strain>Berkeley</strain>
    </source>
</reference>
<reference key="7">
    <citation type="journal article" date="2009" name="Genetics">
        <title>Molecular population genetics and evolution of Drosophila meiosis genes.</title>
        <authorList>
            <person name="Anderson J.A."/>
            <person name="Gilliland W.D."/>
            <person name="Langley C.H."/>
        </authorList>
    </citation>
    <scope>NUCLEOTIDE SEQUENCE [GENOMIC DNA] OF 25-460</scope>
    <scope>VARIANTS ASP-48; VAL-136; SER-174 AND SER-336</scope>
    <source>
        <strain>NC301</strain>
        <strain>NC304</strain>
        <strain>NC306</strain>
        <strain>NC319</strain>
        <strain>NC322</strain>
        <strain>NC335</strain>
        <strain>NC336</strain>
        <strain>NC350</strain>
        <strain>NC357</strain>
        <strain>NC358</strain>
        <strain>NC359</strain>
        <strain>NC361</strain>
        <strain>NC362</strain>
        <strain>NC375</strain>
        <strain>NC397</strain>
        <strain>NC399</strain>
    </source>
</reference>
<protein>
    <recommendedName>
        <fullName>ATP-dependent DNA helicase 2 subunit 1</fullName>
        <ecNumber>3.6.4.12</ecNumber>
    </recommendedName>
    <alternativeName>
        <fullName>ATP-dependent DNA helicase II subunit dp70</fullName>
    </alternativeName>
    <alternativeName>
        <fullName>ATP-dependent helicase Irbp</fullName>
    </alternativeName>
    <alternativeName>
        <fullName>Inverted repeat-binding protein</fullName>
    </alternativeName>
    <alternativeName>
        <fullName>Yolk protein factor 1 subunit beta</fullName>
    </alternativeName>
</protein>
<feature type="chain" id="PRO_0000210183" description="ATP-dependent DNA helicase 2 subunit 1">
    <location>
        <begin position="1"/>
        <end position="631"/>
    </location>
</feature>
<feature type="domain" description="Ku">
    <location>
        <begin position="262"/>
        <end position="487"/>
    </location>
</feature>
<feature type="region of interest" description="Disordered" evidence="2">
    <location>
        <begin position="550"/>
        <end position="570"/>
    </location>
</feature>
<feature type="sequence variant" description="In strain: NC304, NC322, NC359, NC361, NC375 and NC399." evidence="3">
    <original>E</original>
    <variation>D</variation>
    <location>
        <position position="48"/>
    </location>
</feature>
<feature type="sequence variant" description="In strain: NC304, NC322, NC359, NC361 and NC399." evidence="3">
    <original>A</original>
    <variation>V</variation>
    <location>
        <position position="136"/>
    </location>
</feature>
<feature type="sequence variant" description="In strain: Canton-S, NC301, NC304, NC319, NC322, NC335, NC350, NC357, NC358, NC359, NC361, NC362, NC375 and NC399." evidence="3 5">
    <original>R</original>
    <variation>S</variation>
    <location>
        <position position="174"/>
    </location>
</feature>
<feature type="sequence variant" description="In strain: NC335." evidence="3">
    <original>R</original>
    <variation>S</variation>
    <location>
        <position position="336"/>
    </location>
</feature>
<feature type="sequence variant" description="In strain: Canton-S and SB2040." evidence="4 5">
    <original>H</original>
    <variation>P</variation>
    <location>
        <position position="553"/>
    </location>
</feature>
<feature type="sequence conflict" description="In Ref. 1; AAA20644." evidence="6" ref="1">
    <original>S</original>
    <variation>P</variation>
    <location>
        <position position="244"/>
    </location>
</feature>
<name>KU70_DROME</name>
<keyword id="KW-0067">ATP-binding</keyword>
<keyword id="KW-0158">Chromosome</keyword>
<keyword id="KW-0227">DNA damage</keyword>
<keyword id="KW-0233">DNA recombination</keyword>
<keyword id="KW-0234">DNA repair</keyword>
<keyword id="KW-0238">DNA-binding</keyword>
<keyword id="KW-0347">Helicase</keyword>
<keyword id="KW-0378">Hydrolase</keyword>
<keyword id="KW-0547">Nucleotide-binding</keyword>
<keyword id="KW-0539">Nucleus</keyword>
<keyword id="KW-1185">Reference proteome</keyword>
<gene>
    <name type="primary">Irbp</name>
    <name type="synonym">dp70</name>
    <name type="synonym">YPF1b</name>
    <name type="ORF">CG5247</name>
</gene>
<organism>
    <name type="scientific">Drosophila melanogaster</name>
    <name type="common">Fruit fly</name>
    <dbReference type="NCBI Taxonomy" id="7227"/>
    <lineage>
        <taxon>Eukaryota</taxon>
        <taxon>Metazoa</taxon>
        <taxon>Ecdysozoa</taxon>
        <taxon>Arthropoda</taxon>
        <taxon>Hexapoda</taxon>
        <taxon>Insecta</taxon>
        <taxon>Pterygota</taxon>
        <taxon>Neoptera</taxon>
        <taxon>Endopterygota</taxon>
        <taxon>Diptera</taxon>
        <taxon>Brachycera</taxon>
        <taxon>Muscomorpha</taxon>
        <taxon>Ephydroidea</taxon>
        <taxon>Drosophilidae</taxon>
        <taxon>Drosophila</taxon>
        <taxon>Sophophora</taxon>
    </lineage>
</organism>
<proteinExistence type="evidence at transcript level"/>
<sequence length="631" mass="72535">MSTWNPENDVDLLSGSEDEEDVSMKRDYHGREAILFVVDANLQTAGVERLLEALNIIRTAFISGLLVNDKDLIGLIFANTKHSPPPLEASALDNIVMPDNCAVFLPLRQLTKPIVEHYLEFMGGVETQFADVYGLAEPDGRGRFDLMIRLCIEMLEKCGKKLNNAKIAYVTDVREPHPSNSNHFQAALQKASDLEGKEFEFHVIPMVDDFDYEPFYKEFITLSRAIELDAFQVPDAQMLREILSDRKLKQDFLRRCLGHFSFYLGPNLSMSVQYYNYFQRRAYPRKVQILRRDNSVVRTKRVITVQKQKDDGSQDIEHEYQIKVTGGWYTCNVGERDLRISMDQLNRVRNLHKPQMMLLGFKHRSSLPEVSYIKPANFMYPDDQSIIGSKRLFRALWERCLVRDKIAICLFMCKRKSIPRYVALVPVEAPDNGEDKNYRSLLCGDGFKIVYLPEAKHIRHLDLQDWNNTENTADEQKVEFFQKIIKKLRVDYQPNLINDPSLDALQANLLALSLDFSTDTKGLDNLLDTSQQDKRIEKLLPDYEMFAPEAEPHKKRAAKSTTAGASGPKMAKIDDDQLKEFEFVKSLNKDEALTSCTAAQLHFILQHHFDVTMPKSSKKAKLVAKIEELHK</sequence>
<accession>Q23976</accession>
<accession>B5RIF6</accession>
<accession>B6UVU9</accession>
<accession>B6UVV0</accession>
<accession>B6UVV1</accession>
<accession>B6UVV2</accession>
<accession>B6UVV3</accession>
<accession>B6UVV4</accession>
<accession>B6UVV5</accession>
<accession>B6UVV6</accession>
<accession>B6UVV7</accession>
<accession>B6UVV8</accession>
<accession>B6UVV9</accession>
<accession>B6UVW0</accession>
<accession>B6UVW2</accession>
<accession>B6UVW3</accession>
<accession>B6UVW4</accession>
<accession>Q24006</accession>
<accession>Q8SYY3</accession>
<accession>Q9VGP5</accession>
<dbReference type="EC" id="3.6.4.12"/>
<dbReference type="EMBL" id="U05208">
    <property type="protein sequence ID" value="AAA20644.1"/>
    <property type="molecule type" value="mRNA"/>
</dbReference>
<dbReference type="EMBL" id="U15004">
    <property type="protein sequence ID" value="AAC46492.1"/>
    <property type="molecule type" value="mRNA"/>
</dbReference>
<dbReference type="EMBL" id="AE014297">
    <property type="protein sequence ID" value="AAF54631.1"/>
    <property type="molecule type" value="Genomic_DNA"/>
</dbReference>
<dbReference type="EMBL" id="AY071244">
    <property type="protein sequence ID" value="AAL48866.1"/>
    <property type="status" value="ALT_FRAME"/>
    <property type="molecule type" value="mRNA"/>
</dbReference>
<dbReference type="EMBL" id="BT044080">
    <property type="protein sequence ID" value="ACH92145.1"/>
    <property type="molecule type" value="mRNA"/>
</dbReference>
<dbReference type="EMBL" id="FJ218647">
    <property type="protein sequence ID" value="ACI96795.1"/>
    <property type="molecule type" value="Genomic_DNA"/>
</dbReference>
<dbReference type="EMBL" id="FJ218648">
    <property type="protein sequence ID" value="ACI96796.1"/>
    <property type="molecule type" value="Genomic_DNA"/>
</dbReference>
<dbReference type="EMBL" id="FJ218649">
    <property type="protein sequence ID" value="ACI96797.1"/>
    <property type="molecule type" value="Genomic_DNA"/>
</dbReference>
<dbReference type="EMBL" id="FJ218650">
    <property type="protein sequence ID" value="ACI96798.1"/>
    <property type="molecule type" value="Genomic_DNA"/>
</dbReference>
<dbReference type="EMBL" id="FJ218651">
    <property type="protein sequence ID" value="ACI96799.1"/>
    <property type="molecule type" value="Genomic_DNA"/>
</dbReference>
<dbReference type="EMBL" id="FJ218652">
    <property type="protein sequence ID" value="ACI96800.1"/>
    <property type="molecule type" value="Genomic_DNA"/>
</dbReference>
<dbReference type="EMBL" id="FJ218653">
    <property type="protein sequence ID" value="ACI96801.1"/>
    <property type="molecule type" value="Genomic_DNA"/>
</dbReference>
<dbReference type="EMBL" id="FJ218654">
    <property type="protein sequence ID" value="ACI96802.1"/>
    <property type="molecule type" value="Genomic_DNA"/>
</dbReference>
<dbReference type="EMBL" id="FJ218655">
    <property type="protein sequence ID" value="ACI96803.1"/>
    <property type="molecule type" value="Genomic_DNA"/>
</dbReference>
<dbReference type="EMBL" id="FJ218656">
    <property type="protein sequence ID" value="ACI96804.1"/>
    <property type="molecule type" value="Genomic_DNA"/>
</dbReference>
<dbReference type="EMBL" id="FJ218657">
    <property type="protein sequence ID" value="ACI96805.1"/>
    <property type="molecule type" value="Genomic_DNA"/>
</dbReference>
<dbReference type="EMBL" id="FJ218658">
    <property type="protein sequence ID" value="ACI96806.1"/>
    <property type="molecule type" value="Genomic_DNA"/>
</dbReference>
<dbReference type="EMBL" id="FJ218659">
    <property type="protein sequence ID" value="ACI96807.1"/>
    <property type="molecule type" value="Genomic_DNA"/>
</dbReference>
<dbReference type="EMBL" id="FJ218660">
    <property type="protein sequence ID" value="ACI96808.1"/>
    <property type="molecule type" value="Genomic_DNA"/>
</dbReference>
<dbReference type="EMBL" id="FJ218661">
    <property type="protein sequence ID" value="ACI96809.1"/>
    <property type="molecule type" value="Genomic_DNA"/>
</dbReference>
<dbReference type="EMBL" id="FJ218662">
    <property type="protein sequence ID" value="ACI96810.1"/>
    <property type="molecule type" value="Genomic_DNA"/>
</dbReference>
<dbReference type="PIR" id="A53623">
    <property type="entry name" value="A53623"/>
</dbReference>
<dbReference type="RefSeq" id="NP_536773.1">
    <property type="nucleotide sequence ID" value="NM_080512.5"/>
</dbReference>
<dbReference type="SMR" id="Q23976"/>
<dbReference type="BioGRID" id="72892">
    <property type="interactions" value="36"/>
</dbReference>
<dbReference type="FunCoup" id="Q23976">
    <property type="interactions" value="1852"/>
</dbReference>
<dbReference type="IntAct" id="Q23976">
    <property type="interactions" value="34"/>
</dbReference>
<dbReference type="STRING" id="7227.FBpp0081861"/>
<dbReference type="PaxDb" id="7227-FBpp0081861"/>
<dbReference type="DNASU" id="117419"/>
<dbReference type="EnsemblMetazoa" id="FBtr0082385">
    <property type="protein sequence ID" value="FBpp0081861"/>
    <property type="gene ID" value="FBgn0011774"/>
</dbReference>
<dbReference type="GeneID" id="117419"/>
<dbReference type="KEGG" id="dme:Dmel_CG5247"/>
<dbReference type="AGR" id="FB:FBgn0011774"/>
<dbReference type="CTD" id="117419"/>
<dbReference type="FlyBase" id="FBgn0011774">
    <property type="gene designation" value="Irbp"/>
</dbReference>
<dbReference type="VEuPathDB" id="VectorBase:FBgn0011774"/>
<dbReference type="eggNOG" id="KOG2327">
    <property type="taxonomic scope" value="Eukaryota"/>
</dbReference>
<dbReference type="GeneTree" id="ENSGT00940000153239"/>
<dbReference type="HOGENOM" id="CLU_014815_2_0_1"/>
<dbReference type="InParanoid" id="Q23976"/>
<dbReference type="OMA" id="FWANVKH"/>
<dbReference type="OrthoDB" id="3249161at2759"/>
<dbReference type="PhylomeDB" id="Q23976"/>
<dbReference type="Reactome" id="R-DME-6798695">
    <property type="pathway name" value="Neutrophil degranulation"/>
</dbReference>
<dbReference type="BioGRID-ORCS" id="117419">
    <property type="hits" value="0 hits in 3 CRISPR screens"/>
</dbReference>
<dbReference type="GenomeRNAi" id="117419"/>
<dbReference type="PRO" id="PR:Q23976"/>
<dbReference type="Proteomes" id="UP000000803">
    <property type="component" value="Chromosome 3R"/>
</dbReference>
<dbReference type="Bgee" id="FBgn0011774">
    <property type="expression patterns" value="Expressed in adult tracheocyte (Drosophila) in open tracheal system trachea and 28 other cell types or tissues"/>
</dbReference>
<dbReference type="ExpressionAtlas" id="Q23976">
    <property type="expression patterns" value="baseline and differential"/>
</dbReference>
<dbReference type="GO" id="GO:0005694">
    <property type="term" value="C:chromosome"/>
    <property type="evidence" value="ECO:0007669"/>
    <property type="project" value="UniProtKB-SubCell"/>
</dbReference>
<dbReference type="GO" id="GO:0043564">
    <property type="term" value="C:Ku70:Ku80 complex"/>
    <property type="evidence" value="ECO:0000314"/>
    <property type="project" value="FlyBase"/>
</dbReference>
<dbReference type="GO" id="GO:0051575">
    <property type="term" value="F:5'-deoxyribose-5-phosphate lyase activity"/>
    <property type="evidence" value="ECO:0000250"/>
    <property type="project" value="FlyBase"/>
</dbReference>
<dbReference type="GO" id="GO:0005524">
    <property type="term" value="F:ATP binding"/>
    <property type="evidence" value="ECO:0007669"/>
    <property type="project" value="UniProtKB-KW"/>
</dbReference>
<dbReference type="GO" id="GO:0016887">
    <property type="term" value="F:ATP hydrolysis activity"/>
    <property type="evidence" value="ECO:0007669"/>
    <property type="project" value="RHEA"/>
</dbReference>
<dbReference type="GO" id="GO:0003684">
    <property type="term" value="F:damaged DNA binding"/>
    <property type="evidence" value="ECO:0007669"/>
    <property type="project" value="InterPro"/>
</dbReference>
<dbReference type="GO" id="GO:0003677">
    <property type="term" value="F:DNA binding"/>
    <property type="evidence" value="ECO:0000314"/>
    <property type="project" value="FlyBase"/>
</dbReference>
<dbReference type="GO" id="GO:0003678">
    <property type="term" value="F:DNA helicase activity"/>
    <property type="evidence" value="ECO:0007669"/>
    <property type="project" value="InterPro"/>
</dbReference>
<dbReference type="GO" id="GO:0042162">
    <property type="term" value="F:telomeric DNA binding"/>
    <property type="evidence" value="ECO:0000318"/>
    <property type="project" value="GO_Central"/>
</dbReference>
<dbReference type="GO" id="GO:0006310">
    <property type="term" value="P:DNA recombination"/>
    <property type="evidence" value="ECO:0007669"/>
    <property type="project" value="UniProtKB-KW"/>
</dbReference>
<dbReference type="GO" id="GO:0006303">
    <property type="term" value="P:double-strand break repair via nonhomologous end joining"/>
    <property type="evidence" value="ECO:0000315"/>
    <property type="project" value="FlyBase"/>
</dbReference>
<dbReference type="GO" id="GO:0000723">
    <property type="term" value="P:telomere maintenance"/>
    <property type="evidence" value="ECO:0000315"/>
    <property type="project" value="FlyBase"/>
</dbReference>
<dbReference type="CDD" id="cd00788">
    <property type="entry name" value="KU70"/>
    <property type="match status" value="1"/>
</dbReference>
<dbReference type="CDD" id="cd01458">
    <property type="entry name" value="vWA_ku"/>
    <property type="match status" value="1"/>
</dbReference>
<dbReference type="FunFam" id="2.40.290.10:FF:000001">
    <property type="entry name" value="X-ray repair cross complementing 6"/>
    <property type="match status" value="1"/>
</dbReference>
<dbReference type="Gene3D" id="1.10.1600.10">
    <property type="match status" value="1"/>
</dbReference>
<dbReference type="Gene3D" id="2.40.290.10">
    <property type="match status" value="1"/>
</dbReference>
<dbReference type="Gene3D" id="4.10.970.10">
    <property type="entry name" value="Ku70, bridge and pillars"/>
    <property type="match status" value="1"/>
</dbReference>
<dbReference type="Gene3D" id="3.40.50.410">
    <property type="entry name" value="von Willebrand factor, type A domain"/>
    <property type="match status" value="1"/>
</dbReference>
<dbReference type="InterPro" id="IPR006165">
    <property type="entry name" value="Ku70"/>
</dbReference>
<dbReference type="InterPro" id="IPR006164">
    <property type="entry name" value="Ku70/Ku80_beta-barrel_dom"/>
</dbReference>
<dbReference type="InterPro" id="IPR027388">
    <property type="entry name" value="Ku70_bridge/pillars_dom_sf"/>
</dbReference>
<dbReference type="InterPro" id="IPR047087">
    <property type="entry name" value="KU70_core_dom"/>
</dbReference>
<dbReference type="InterPro" id="IPR005160">
    <property type="entry name" value="Ku_C"/>
</dbReference>
<dbReference type="InterPro" id="IPR005161">
    <property type="entry name" value="Ku_N"/>
</dbReference>
<dbReference type="InterPro" id="IPR016194">
    <property type="entry name" value="SPOC-like_C_dom_sf"/>
</dbReference>
<dbReference type="InterPro" id="IPR036465">
    <property type="entry name" value="vWFA_dom_sf"/>
</dbReference>
<dbReference type="NCBIfam" id="TIGR00578">
    <property type="entry name" value="ku70"/>
    <property type="match status" value="1"/>
</dbReference>
<dbReference type="PANTHER" id="PTHR12604">
    <property type="entry name" value="KU AUTOANTIGEN DNA HELICASE"/>
    <property type="match status" value="1"/>
</dbReference>
<dbReference type="PANTHER" id="PTHR12604:SF2">
    <property type="entry name" value="X-RAY REPAIR CROSS-COMPLEMENTING PROTEIN 6"/>
    <property type="match status" value="1"/>
</dbReference>
<dbReference type="Pfam" id="PF02735">
    <property type="entry name" value="Ku"/>
    <property type="match status" value="1"/>
</dbReference>
<dbReference type="Pfam" id="PF03730">
    <property type="entry name" value="Ku_C"/>
    <property type="match status" value="1"/>
</dbReference>
<dbReference type="Pfam" id="PF03731">
    <property type="entry name" value="Ku_N"/>
    <property type="match status" value="1"/>
</dbReference>
<dbReference type="PIRSF" id="PIRSF003033">
    <property type="entry name" value="Ku70"/>
    <property type="match status" value="1"/>
</dbReference>
<dbReference type="SMART" id="SM00559">
    <property type="entry name" value="Ku78"/>
    <property type="match status" value="1"/>
</dbReference>
<dbReference type="SUPFAM" id="SSF100939">
    <property type="entry name" value="SPOC domain-like"/>
    <property type="match status" value="1"/>
</dbReference>
<dbReference type="SUPFAM" id="SSF53300">
    <property type="entry name" value="vWA-like"/>
    <property type="match status" value="1"/>
</dbReference>